<feature type="chain" id="PRO_0000156841" description="Oxaloacetate tautomerase fahd-1, mitochondrial" evidence="7">
    <location>
        <begin position="1"/>
        <end position="214"/>
    </location>
</feature>
<feature type="binding site" evidence="2">
    <location>
        <position position="65"/>
    </location>
    <ligand>
        <name>Mg(2+)</name>
        <dbReference type="ChEBI" id="CHEBI:18420"/>
    </ligand>
</feature>
<feature type="binding site" evidence="2">
    <location>
        <position position="67"/>
    </location>
    <ligand>
        <name>Mg(2+)</name>
        <dbReference type="ChEBI" id="CHEBI:18420"/>
    </ligand>
</feature>
<feature type="binding site" evidence="2">
    <location>
        <position position="96"/>
    </location>
    <ligand>
        <name>Mg(2+)</name>
        <dbReference type="ChEBI" id="CHEBI:18420"/>
    </ligand>
</feature>
<keyword id="KW-0413">Isomerase</keyword>
<keyword id="KW-0460">Magnesium</keyword>
<keyword id="KW-0479">Metal-binding</keyword>
<keyword id="KW-0496">Mitochondrion</keyword>
<keyword id="KW-1185">Reference proteome</keyword>
<dbReference type="EC" id="5.3.2.2" evidence="3"/>
<dbReference type="EMBL" id="FO080277">
    <property type="protein sequence ID" value="CCD62534.1"/>
    <property type="molecule type" value="Genomic_DNA"/>
</dbReference>
<dbReference type="PIR" id="S44919">
    <property type="entry name" value="S44919"/>
</dbReference>
<dbReference type="RefSeq" id="NP_498715.1">
    <property type="nucleotide sequence ID" value="NM_066314.7"/>
</dbReference>
<dbReference type="SMR" id="P34673"/>
<dbReference type="BioGRID" id="41316">
    <property type="interactions" value="4"/>
</dbReference>
<dbReference type="DIP" id="DIP-25035N"/>
<dbReference type="FunCoup" id="P34673">
    <property type="interactions" value="2118"/>
</dbReference>
<dbReference type="STRING" id="6239.ZK688.3.2"/>
<dbReference type="PaxDb" id="6239-ZK688.3.2"/>
<dbReference type="PeptideAtlas" id="P34673"/>
<dbReference type="EnsemblMetazoa" id="ZK688.3.1">
    <property type="protein sequence ID" value="ZK688.3.1"/>
    <property type="gene ID" value="WBGene00022798"/>
</dbReference>
<dbReference type="EnsemblMetazoa" id="ZK688.3.2">
    <property type="protein sequence ID" value="ZK688.3.2"/>
    <property type="gene ID" value="WBGene00022798"/>
</dbReference>
<dbReference type="GeneID" id="176109"/>
<dbReference type="KEGG" id="cel:CELE_ZK688.3"/>
<dbReference type="UCSC" id="ZK688.3.1">
    <property type="organism name" value="c. elegans"/>
</dbReference>
<dbReference type="AGR" id="WB:WBGene00022798"/>
<dbReference type="CTD" id="176109"/>
<dbReference type="WormBase" id="ZK688.3">
    <property type="protein sequence ID" value="CE00461"/>
    <property type="gene ID" value="WBGene00022798"/>
    <property type="gene designation" value="fahd-1"/>
</dbReference>
<dbReference type="eggNOG" id="KOG1535">
    <property type="taxonomic scope" value="Eukaryota"/>
</dbReference>
<dbReference type="GeneTree" id="ENSGT00940000160452"/>
<dbReference type="HOGENOM" id="CLU_028458_5_0_1"/>
<dbReference type="InParanoid" id="P34673"/>
<dbReference type="OMA" id="NCRKVIC"/>
<dbReference type="OrthoDB" id="411064at2759"/>
<dbReference type="PhylomeDB" id="P34673"/>
<dbReference type="Reactome" id="R-CEL-70268">
    <property type="pathway name" value="Pyruvate metabolism"/>
</dbReference>
<dbReference type="PRO" id="PR:P34673"/>
<dbReference type="Proteomes" id="UP000001940">
    <property type="component" value="Chromosome III"/>
</dbReference>
<dbReference type="Bgee" id="WBGene00022798">
    <property type="expression patterns" value="Expressed in larva and 4 other cell types or tissues"/>
</dbReference>
<dbReference type="GO" id="GO:0005739">
    <property type="term" value="C:mitochondrion"/>
    <property type="evidence" value="ECO:0000314"/>
    <property type="project" value="WormBase"/>
</dbReference>
<dbReference type="GO" id="GO:0018773">
    <property type="term" value="F:acetylpyruvate hydrolase activity"/>
    <property type="evidence" value="ECO:0000318"/>
    <property type="project" value="GO_Central"/>
</dbReference>
<dbReference type="GO" id="GO:0046872">
    <property type="term" value="F:metal ion binding"/>
    <property type="evidence" value="ECO:0007669"/>
    <property type="project" value="UniProtKB-KW"/>
</dbReference>
<dbReference type="GO" id="GO:0050163">
    <property type="term" value="F:oxaloacetate tautomerase activity"/>
    <property type="evidence" value="ECO:0000250"/>
    <property type="project" value="UniProtKB"/>
</dbReference>
<dbReference type="GO" id="GO:0006107">
    <property type="term" value="P:oxaloacetate metabolic process"/>
    <property type="evidence" value="ECO:0000250"/>
    <property type="project" value="UniProtKB"/>
</dbReference>
<dbReference type="FunFam" id="3.90.850.10:FF:000014">
    <property type="entry name" value="Uncharacterized mitochondrial hydrolase FMP41"/>
    <property type="match status" value="1"/>
</dbReference>
<dbReference type="Gene3D" id="3.90.850.10">
    <property type="entry name" value="Fumarylacetoacetase-like, C-terminal domain"/>
    <property type="match status" value="1"/>
</dbReference>
<dbReference type="InterPro" id="IPR011234">
    <property type="entry name" value="Fumarylacetoacetase-like_C"/>
</dbReference>
<dbReference type="InterPro" id="IPR036663">
    <property type="entry name" value="Fumarylacetoacetase_C_sf"/>
</dbReference>
<dbReference type="PANTHER" id="PTHR11820">
    <property type="entry name" value="ACYLPYRUVASE"/>
    <property type="match status" value="1"/>
</dbReference>
<dbReference type="PANTHER" id="PTHR11820:SF7">
    <property type="entry name" value="ACYLPYRUVASE FAHD1, MITOCHONDRIAL"/>
    <property type="match status" value="1"/>
</dbReference>
<dbReference type="Pfam" id="PF01557">
    <property type="entry name" value="FAA_hydrolase"/>
    <property type="match status" value="1"/>
</dbReference>
<dbReference type="SUPFAM" id="SSF56529">
    <property type="entry name" value="FAH"/>
    <property type="match status" value="1"/>
</dbReference>
<accession>P34673</accession>
<proteinExistence type="evidence at transcript level"/>
<organism>
    <name type="scientific">Caenorhabditis elegans</name>
    <dbReference type="NCBI Taxonomy" id="6239"/>
    <lineage>
        <taxon>Eukaryota</taxon>
        <taxon>Metazoa</taxon>
        <taxon>Ecdysozoa</taxon>
        <taxon>Nematoda</taxon>
        <taxon>Chromadorea</taxon>
        <taxon>Rhabditida</taxon>
        <taxon>Rhabditina</taxon>
        <taxon>Rhabditomorpha</taxon>
        <taxon>Rhabditoidea</taxon>
        <taxon>Rhabditidae</taxon>
        <taxon>Peloderinae</taxon>
        <taxon>Caenorhabditis</taxon>
    </lineage>
</organism>
<protein>
    <recommendedName>
        <fullName evidence="7">Oxaloacetate tautomerase fahd-1, mitochondrial</fullName>
        <ecNumber evidence="3">5.3.2.2</ecNumber>
    </recommendedName>
    <alternativeName>
        <fullName evidence="6">Fumarylacetoacetate hydrolase domain-containing protein 1</fullName>
        <shortName evidence="6">FAH domain-containing protein 1</shortName>
    </alternativeName>
</protein>
<comment type="function">
    <text evidence="3">Tautomerase that converts enol-oxaloacetate, a strong inhibitor of succinate dehydrogenase, to the physiological keto form of oxaloacetate.</text>
</comment>
<comment type="catalytic activity">
    <reaction evidence="3">
        <text>oxaloacetate = enol-oxaloacetate</text>
        <dbReference type="Rhea" id="RHEA:16021"/>
        <dbReference type="ChEBI" id="CHEBI:16452"/>
        <dbReference type="ChEBI" id="CHEBI:17479"/>
        <dbReference type="EC" id="5.3.2.2"/>
    </reaction>
    <physiologicalReaction direction="right-to-left" evidence="1">
        <dbReference type="Rhea" id="RHEA:16023"/>
    </physiologicalReaction>
</comment>
<comment type="cofactor">
    <cofactor evidence="2">
        <name>Mg(2+)</name>
        <dbReference type="ChEBI" id="CHEBI:18420"/>
    </cofactor>
    <cofactor evidence="2">
        <name>Mn(2+)</name>
        <dbReference type="ChEBI" id="CHEBI:29035"/>
    </cofactor>
    <text evidence="2">Requires a divalent metal cation for activity.</text>
</comment>
<comment type="subcellular location">
    <subcellularLocation>
        <location evidence="4">Mitochondrion</location>
    </subcellularLocation>
</comment>
<comment type="tissue specificity">
    <text evidence="4">Widely expressed.</text>
</comment>
<comment type="developmental stage">
    <text evidence="4">Expressed from the early gastrula stage throughout the adult life.</text>
</comment>
<comment type="disruption phenotype">
    <text evidence="4 5">Reduced brood size, impaired egg-laying behavior and a severe locomotion deficit, characterized by a reduced frequency of body bends, reduced exploratory movements and reduced performance in an endurance exercise test (PubMed:26266933, PubMed:31412049). Cells show increased expression of enzymes involved in serotonin biosynthesis (PubMed:31412049).</text>
</comment>
<comment type="similarity">
    <text evidence="7">Belongs to the FAH family.</text>
</comment>
<name>FAHD1_CAEEL</name>
<reference key="1">
    <citation type="journal article" date="1994" name="Nature">
        <title>2.2 Mb of contiguous nucleotide sequence from chromosome III of C. elegans.</title>
        <authorList>
            <person name="Wilson R."/>
            <person name="Ainscough R."/>
            <person name="Anderson K."/>
            <person name="Baynes C."/>
            <person name="Berks M."/>
            <person name="Bonfield J."/>
            <person name="Burton J."/>
            <person name="Connell M."/>
            <person name="Copsey T."/>
            <person name="Cooper J."/>
            <person name="Coulson A."/>
            <person name="Craxton M."/>
            <person name="Dear S."/>
            <person name="Du Z."/>
            <person name="Durbin R."/>
            <person name="Favello A."/>
            <person name="Fraser A."/>
            <person name="Fulton L."/>
            <person name="Gardner A."/>
            <person name="Green P."/>
            <person name="Hawkins T."/>
            <person name="Hillier L."/>
            <person name="Jier M."/>
            <person name="Johnston L."/>
            <person name="Jones M."/>
            <person name="Kershaw J."/>
            <person name="Kirsten J."/>
            <person name="Laisster N."/>
            <person name="Latreille P."/>
            <person name="Lightning J."/>
            <person name="Lloyd C."/>
            <person name="Mortimore B."/>
            <person name="O'Callaghan M."/>
            <person name="Parsons J."/>
            <person name="Percy C."/>
            <person name="Rifken L."/>
            <person name="Roopra A."/>
            <person name="Saunders D."/>
            <person name="Shownkeen R."/>
            <person name="Sims M."/>
            <person name="Smaldon N."/>
            <person name="Smith A."/>
            <person name="Smith M."/>
            <person name="Sonnhammer E."/>
            <person name="Staden R."/>
            <person name="Sulston J."/>
            <person name="Thierry-Mieg J."/>
            <person name="Thomas K."/>
            <person name="Vaudin M."/>
            <person name="Vaughan K."/>
            <person name="Waterston R."/>
            <person name="Watson A."/>
            <person name="Weinstock L."/>
            <person name="Wilkinson-Sproat J."/>
            <person name="Wohldman P."/>
        </authorList>
    </citation>
    <scope>NUCLEOTIDE SEQUENCE [LARGE SCALE GENOMIC DNA]</scope>
    <source>
        <strain>Bristol N2</strain>
    </source>
</reference>
<reference key="2">
    <citation type="journal article" date="1998" name="Science">
        <title>Genome sequence of the nematode C. elegans: a platform for investigating biology.</title>
        <authorList>
            <consortium name="The C. elegans sequencing consortium"/>
        </authorList>
    </citation>
    <scope>NUCLEOTIDE SEQUENCE [LARGE SCALE GENOMIC DNA]</scope>
    <source>
        <strain>Bristol N2</strain>
    </source>
</reference>
<reference key="3">
    <citation type="journal article" date="2015" name="PLoS ONE">
        <title>FAH domain containing protein 1 (FAHD-1) is required for mitochondrial function and locomotion activity in C. elegans.</title>
        <authorList>
            <person name="Taferner A."/>
            <person name="Pircher H."/>
            <person name="Koziel R."/>
            <person name="von Grafenstein S."/>
            <person name="Baraldo G."/>
            <person name="Palikaras K."/>
            <person name="Liedl K.R."/>
            <person name="Tavernarakis N."/>
            <person name="Jansen-Duerr P."/>
        </authorList>
    </citation>
    <scope>SUBCELLULAR LOCATION</scope>
    <scope>TISSUE SPECIFICITY</scope>
    <scope>DEVELOPMENTAL STAGE</scope>
    <scope>DISRUPTION PHENOTYPE</scope>
</reference>
<reference key="4">
    <citation type="journal article" date="2019" name="PLoS ONE">
        <title>Modulation of serotonin signaling by the putative oxaloacetate decarboxylase FAHD-1 in Caenorhabditis elegans.</title>
        <authorList>
            <person name="Baraldo G."/>
            <person name="Etemad S."/>
            <person name="Weiss A.K.H."/>
            <person name="Jansen-Duerr P."/>
            <person name="Mack H.I.D."/>
        </authorList>
    </citation>
    <scope>DISRUPTION PHENOTYPE</scope>
</reference>
<gene>
    <name evidence="6 8" type="primary">fahd-1</name>
    <name evidence="8" type="ORF">ZK688.3</name>
</gene>
<sequence>MSSLAGFRNLATKIVCVGRNYKDHALELGNAIPKKPMLFVKTVNSFIVEGEPIVAPPGCQNLHQEVELGVVISKKASRISKSDAMDYIGGYTVALDMTARDFQDEAKKAGAPWFLAKSFDGSCPIGGFLPVSDIPNPHDVELFCKINGKDQQRCRTDVMIFDIPTLLEYTTQFFTLEVGDVVLTGTPAGVTKINSGDVIEFGLTDKLNSKFNVQ</sequence>
<evidence type="ECO:0000250" key="1">
    <source>
        <dbReference type="UniProtKB" id="F1MLX0"/>
    </source>
</evidence>
<evidence type="ECO:0000250" key="2">
    <source>
        <dbReference type="UniProtKB" id="Q6P587"/>
    </source>
</evidence>
<evidence type="ECO:0000250" key="3">
    <source>
        <dbReference type="UniProtKB" id="Q96GK7"/>
    </source>
</evidence>
<evidence type="ECO:0000269" key="4">
    <source>
    </source>
</evidence>
<evidence type="ECO:0000269" key="5">
    <source>
    </source>
</evidence>
<evidence type="ECO:0000303" key="6">
    <source>
    </source>
</evidence>
<evidence type="ECO:0000305" key="7"/>
<evidence type="ECO:0000312" key="8">
    <source>
        <dbReference type="WormBase" id="ZK688.3"/>
    </source>
</evidence>